<name>YCF4_GOSBA</name>
<proteinExistence type="inferred from homology"/>
<comment type="function">
    <text evidence="1">Seems to be required for the assembly of the photosystem I complex.</text>
</comment>
<comment type="subcellular location">
    <subcellularLocation>
        <location evidence="1">Plastid</location>
        <location evidence="1">Chloroplast thylakoid membrane</location>
        <topology evidence="1">Multi-pass membrane protein</topology>
    </subcellularLocation>
</comment>
<comment type="similarity">
    <text evidence="1">Belongs to the Ycf4 family.</text>
</comment>
<feature type="chain" id="PRO_0000275655" description="Photosystem I assembly protein Ycf4">
    <location>
        <begin position="1"/>
        <end position="184"/>
    </location>
</feature>
<feature type="transmembrane region" description="Helical" evidence="1">
    <location>
        <begin position="22"/>
        <end position="42"/>
    </location>
</feature>
<feature type="transmembrane region" description="Helical" evidence="1">
    <location>
        <begin position="57"/>
        <end position="77"/>
    </location>
</feature>
<geneLocation type="chloroplast"/>
<keyword id="KW-0150">Chloroplast</keyword>
<keyword id="KW-0472">Membrane</keyword>
<keyword id="KW-0602">Photosynthesis</keyword>
<keyword id="KW-0934">Plastid</keyword>
<keyword id="KW-0793">Thylakoid</keyword>
<keyword id="KW-0812">Transmembrane</keyword>
<keyword id="KW-1133">Transmembrane helix</keyword>
<protein>
    <recommendedName>
        <fullName evidence="1">Photosystem I assembly protein Ycf4</fullName>
    </recommendedName>
</protein>
<organism>
    <name type="scientific">Gossypium barbadense</name>
    <name type="common">Sea Island cotton</name>
    <name type="synonym">Hibiscus barbadensis</name>
    <dbReference type="NCBI Taxonomy" id="3634"/>
    <lineage>
        <taxon>Eukaryota</taxon>
        <taxon>Viridiplantae</taxon>
        <taxon>Streptophyta</taxon>
        <taxon>Embryophyta</taxon>
        <taxon>Tracheophyta</taxon>
        <taxon>Spermatophyta</taxon>
        <taxon>Magnoliopsida</taxon>
        <taxon>eudicotyledons</taxon>
        <taxon>Gunneridae</taxon>
        <taxon>Pentapetalae</taxon>
        <taxon>rosids</taxon>
        <taxon>malvids</taxon>
        <taxon>Malvales</taxon>
        <taxon>Malvaceae</taxon>
        <taxon>Malvoideae</taxon>
        <taxon>Gossypium</taxon>
    </lineage>
</organism>
<evidence type="ECO:0000255" key="1">
    <source>
        <dbReference type="HAMAP-Rule" id="MF_00437"/>
    </source>
</evidence>
<sequence length="184" mass="21466">MSWRSESIWIEFIVGSRKTSNFCWAFILFFGSLGFLLVGTSSYLGRNLISLFPSQQIVFFPQGIVMSFYGIAGLFISSYLWCTIFWNVGSGYDRFDRKEGIVCIFRWGFPGKNRRIFLRFLMKDIQSIRIEVKEGIYARRVLYMEIRGQGAVPLTRTDENLTPREIEQKAAELAYFLRVPIEVF</sequence>
<reference key="1">
    <citation type="journal article" date="2006" name="Genes Genet. Syst.">
        <title>Complete nucleotide sequence of the cotton (Gossypium barbadense L.) chloroplast genome with a comparative analysis of sequences among 9 dicot plants.</title>
        <authorList>
            <person name="Ibrahim R.I.H."/>
            <person name="Azuma J."/>
            <person name="Sakamoto M."/>
        </authorList>
    </citation>
    <scope>NUCLEOTIDE SEQUENCE [LARGE SCALE GENOMIC DNA]</scope>
</reference>
<dbReference type="EMBL" id="AP009123">
    <property type="protein sequence ID" value="BAF41258.1"/>
    <property type="molecule type" value="Genomic_DNA"/>
</dbReference>
<dbReference type="RefSeq" id="YP_913198.1">
    <property type="nucleotide sequence ID" value="NC_008641.1"/>
</dbReference>
<dbReference type="GeneID" id="4575309"/>
<dbReference type="GO" id="GO:0009535">
    <property type="term" value="C:chloroplast thylakoid membrane"/>
    <property type="evidence" value="ECO:0007669"/>
    <property type="project" value="UniProtKB-SubCell"/>
</dbReference>
<dbReference type="GO" id="GO:0009522">
    <property type="term" value="C:photosystem I"/>
    <property type="evidence" value="ECO:0007669"/>
    <property type="project" value="InterPro"/>
</dbReference>
<dbReference type="GO" id="GO:0015979">
    <property type="term" value="P:photosynthesis"/>
    <property type="evidence" value="ECO:0007669"/>
    <property type="project" value="UniProtKB-UniRule"/>
</dbReference>
<dbReference type="HAMAP" id="MF_00437">
    <property type="entry name" value="Ycf4"/>
    <property type="match status" value="1"/>
</dbReference>
<dbReference type="InterPro" id="IPR003359">
    <property type="entry name" value="PSI_Ycf4_assembly"/>
</dbReference>
<dbReference type="PANTHER" id="PTHR33288">
    <property type="match status" value="1"/>
</dbReference>
<dbReference type="PANTHER" id="PTHR33288:SF4">
    <property type="entry name" value="PHOTOSYSTEM I ASSEMBLY PROTEIN YCF4"/>
    <property type="match status" value="1"/>
</dbReference>
<dbReference type="Pfam" id="PF02392">
    <property type="entry name" value="Ycf4"/>
    <property type="match status" value="1"/>
</dbReference>
<accession>A0ZZ46</accession>
<gene>
    <name evidence="1" type="primary">ycf4</name>
</gene>